<comment type="function">
    <text evidence="5">Binds to the DNA consensus sequence 5'-GGGGAATCTCC-3'.</text>
</comment>
<comment type="function">
    <text evidence="5">Putative regulatory component of the chromatin remodeling INO80 complex which is involved in transcriptional regulation, DNA replication and probably DNA repair. Modulates the deubiquitinase activity of UCHL5 in the INO80 complex.</text>
</comment>
<comment type="subunit">
    <text evidence="3 5 6">Component of the chromatin remodeling INO80 complex; specifically part of a complex module associated with the N-terminus of INO80. Interacts with UCHL5; NFRKB competes with ADRM1 for interaction with UCHL5.</text>
</comment>
<comment type="interaction">
    <interactant intactId="EBI-2511210">
        <id>Q6P4R8</id>
    </interactant>
    <interactant intactId="EBI-1051183">
        <id>Q9Y5K5</id>
        <label>UCHL5</label>
    </interactant>
    <organismsDiffer>false</organismsDiffer>
    <experiments>14</experiments>
</comment>
<comment type="interaction">
    <interactant intactId="EBI-2511210">
        <id>Q6P4R8</id>
    </interactant>
    <interactant intactId="EBI-11749875">
        <id>Q9Y5K5-3</id>
        <label>UCHL5</label>
    </interactant>
    <organismsDiffer>false</organismsDiffer>
    <experiments>3</experiments>
</comment>
<comment type="subcellular location">
    <subcellularLocation>
        <location evidence="5">Nucleus</location>
    </subcellularLocation>
</comment>
<comment type="alternative products">
    <event type="alternative splicing"/>
    <isoform>
        <id>Q6P4R8-1</id>
        <name>1</name>
        <sequence type="displayed"/>
    </isoform>
    <isoform>
        <id>Q6P4R8-2</id>
        <name>2</name>
        <sequence type="described" ref="VSP_017592 VSP_017593"/>
    </isoform>
    <isoform>
        <id>Q6P4R8-3</id>
        <name>3</name>
        <sequence type="described" ref="VSP_017594"/>
    </isoform>
</comment>
<comment type="tissue specificity">
    <text evidence="4">Expressed in thymus, brain, testes, spleen and liver.</text>
</comment>
<comment type="domain">
    <text>NFRKB seems to be mostly disordered. The wing-helix like domain doesn't bind DNA.</text>
</comment>
<comment type="similarity">
    <text evidence="10">Belongs to the NFRKB family.</text>
</comment>
<comment type="sequence caution" evidence="10">
    <conflict type="frameshift">
        <sequence resource="EMBL-CDS" id="AAA17871"/>
    </conflict>
</comment>
<protein>
    <recommendedName>
        <fullName>Nuclear factor related to kappa-B-binding protein</fullName>
    </recommendedName>
    <alternativeName>
        <fullName>DNA-binding protein R kappa-B</fullName>
    </alternativeName>
    <alternativeName>
        <fullName>INO80 complex subunit G</fullName>
    </alternativeName>
</protein>
<name>NFRKB_HUMAN</name>
<dbReference type="EMBL" id="U08191">
    <property type="protein sequence ID" value="AAA17871.1"/>
    <property type="status" value="ALT_SEQ"/>
    <property type="molecule type" value="mRNA"/>
</dbReference>
<dbReference type="EMBL" id="X80878">
    <property type="protein sequence ID" value="CAA56846.1"/>
    <property type="molecule type" value="mRNA"/>
</dbReference>
<dbReference type="EMBL" id="BC063280">
    <property type="protein sequence ID" value="AAH63280.1"/>
    <property type="molecule type" value="mRNA"/>
</dbReference>
<dbReference type="EMBL" id="AL512730">
    <property type="protein sequence ID" value="CAC21663.1"/>
    <property type="molecule type" value="mRNA"/>
</dbReference>
<dbReference type="CCDS" id="CCDS44770.1">
    <molecule id="Q6P4R8-1"/>
</dbReference>
<dbReference type="CCDS" id="CCDS8483.1">
    <molecule id="Q6P4R8-2"/>
</dbReference>
<dbReference type="PIR" id="S52863">
    <property type="entry name" value="S52863"/>
</dbReference>
<dbReference type="RefSeq" id="NP_001137307.1">
    <molecule id="Q6P4R8-1"/>
    <property type="nucleotide sequence ID" value="NM_001143835.2"/>
</dbReference>
<dbReference type="RefSeq" id="NP_006156.2">
    <molecule id="Q6P4R8-2"/>
    <property type="nucleotide sequence ID" value="NM_006165.3"/>
</dbReference>
<dbReference type="RefSeq" id="XP_011541153.1">
    <property type="nucleotide sequence ID" value="XM_011542851.2"/>
</dbReference>
<dbReference type="RefSeq" id="XP_011541154.1">
    <property type="nucleotide sequence ID" value="XM_011542852.2"/>
</dbReference>
<dbReference type="RefSeq" id="XP_016873285.1">
    <property type="nucleotide sequence ID" value="XM_017017796.1"/>
</dbReference>
<dbReference type="PDB" id="3U21">
    <property type="method" value="X-ray"/>
    <property type="resolution" value="2.18 A"/>
    <property type="chains" value="A/B=370-495"/>
</dbReference>
<dbReference type="PDB" id="4UF5">
    <property type="method" value="X-ray"/>
    <property type="resolution" value="3.70 A"/>
    <property type="chains" value="B=40-170"/>
</dbReference>
<dbReference type="PDB" id="4UF6">
    <property type="method" value="X-ray"/>
    <property type="resolution" value="3.69 A"/>
    <property type="chains" value="C/F/I/L=40-101"/>
</dbReference>
<dbReference type="PDB" id="4WLP">
    <property type="method" value="X-ray"/>
    <property type="resolution" value="3.10 A"/>
    <property type="chains" value="B=40-153"/>
</dbReference>
<dbReference type="PDBsum" id="3U21"/>
<dbReference type="PDBsum" id="4UF5"/>
<dbReference type="PDBsum" id="4UF6"/>
<dbReference type="PDBsum" id="4WLP"/>
<dbReference type="SMR" id="Q6P4R8"/>
<dbReference type="BioGRID" id="110864">
    <property type="interactions" value="121"/>
</dbReference>
<dbReference type="ComplexPortal" id="CPX-846">
    <property type="entry name" value="INO80 chromatin remodeling complex"/>
</dbReference>
<dbReference type="CORUM" id="Q6P4R8"/>
<dbReference type="FunCoup" id="Q6P4R8">
    <property type="interactions" value="3325"/>
</dbReference>
<dbReference type="IntAct" id="Q6P4R8">
    <property type="interactions" value="90"/>
</dbReference>
<dbReference type="MINT" id="Q6P4R8"/>
<dbReference type="STRING" id="9606.ENSP00000436926"/>
<dbReference type="CarbonylDB" id="Q6P4R8"/>
<dbReference type="GlyConnect" id="2888">
    <property type="glycosylation" value="1 O-GlcNAc glycan (2 sites)"/>
</dbReference>
<dbReference type="GlyCosmos" id="Q6P4R8">
    <property type="glycosylation" value="30 sites, 2 glycans"/>
</dbReference>
<dbReference type="GlyGen" id="Q6P4R8">
    <property type="glycosylation" value="64 sites, 2 O-linked glycans (62 sites)"/>
</dbReference>
<dbReference type="iPTMnet" id="Q6P4R8"/>
<dbReference type="MetOSite" id="Q6P4R8"/>
<dbReference type="PhosphoSitePlus" id="Q6P4R8"/>
<dbReference type="BioMuta" id="NFRKB"/>
<dbReference type="DMDM" id="90101417"/>
<dbReference type="jPOST" id="Q6P4R8"/>
<dbReference type="MassIVE" id="Q6P4R8"/>
<dbReference type="PaxDb" id="9606-ENSP00000436926"/>
<dbReference type="PeptideAtlas" id="Q6P4R8"/>
<dbReference type="ProteomicsDB" id="66983">
    <molecule id="Q6P4R8-1"/>
</dbReference>
<dbReference type="ProteomicsDB" id="66984">
    <molecule id="Q6P4R8-2"/>
</dbReference>
<dbReference type="ProteomicsDB" id="66985">
    <molecule id="Q6P4R8-3"/>
</dbReference>
<dbReference type="Pumba" id="Q6P4R8"/>
<dbReference type="Antibodypedia" id="1820">
    <property type="antibodies" value="118 antibodies from 26 providers"/>
</dbReference>
<dbReference type="DNASU" id="4798"/>
<dbReference type="Ensembl" id="ENST00000446488.7">
    <molecule id="Q6P4R8-1"/>
    <property type="protein sequence ID" value="ENSP00000400476.2"/>
    <property type="gene ID" value="ENSG00000170322.15"/>
</dbReference>
<dbReference type="Ensembl" id="ENST00000524746.5">
    <molecule id="Q6P4R8-1"/>
    <property type="protein sequence ID" value="ENSP00000433572.1"/>
    <property type="gene ID" value="ENSG00000170322.15"/>
</dbReference>
<dbReference type="Ensembl" id="ENST00000524794.5">
    <molecule id="Q6P4R8-2"/>
    <property type="protein sequence ID" value="ENSP00000436926.1"/>
    <property type="gene ID" value="ENSG00000170322.15"/>
</dbReference>
<dbReference type="Ensembl" id="ENST00000682444.1">
    <molecule id="Q6P4R8-1"/>
    <property type="protein sequence ID" value="ENSP00000506850.1"/>
    <property type="gene ID" value="ENSG00000170322.15"/>
</dbReference>
<dbReference type="GeneID" id="4798"/>
<dbReference type="KEGG" id="hsa:4798"/>
<dbReference type="MANE-Select" id="ENST00000682444.1">
    <property type="protein sequence ID" value="ENSP00000506850.1"/>
    <property type="RefSeq nucleotide sequence ID" value="NM_001143835.2"/>
    <property type="RefSeq protein sequence ID" value="NP_001137307.1"/>
</dbReference>
<dbReference type="UCSC" id="uc001qfg.4">
    <molecule id="Q6P4R8-1"/>
    <property type="organism name" value="human"/>
</dbReference>
<dbReference type="AGR" id="HGNC:7802"/>
<dbReference type="CTD" id="4798"/>
<dbReference type="DisGeNET" id="4798"/>
<dbReference type="GeneCards" id="NFRKB"/>
<dbReference type="HGNC" id="HGNC:7802">
    <property type="gene designation" value="NFRKB"/>
</dbReference>
<dbReference type="HPA" id="ENSG00000170322">
    <property type="expression patterns" value="Low tissue specificity"/>
</dbReference>
<dbReference type="MIM" id="164013">
    <property type="type" value="gene"/>
</dbReference>
<dbReference type="neXtProt" id="NX_Q6P4R8"/>
<dbReference type="OpenTargets" id="ENSG00000170322"/>
<dbReference type="PharmGKB" id="PA31606"/>
<dbReference type="VEuPathDB" id="HostDB:ENSG00000170322"/>
<dbReference type="eggNOG" id="KOG1927">
    <property type="taxonomic scope" value="Eukaryota"/>
</dbReference>
<dbReference type="GeneTree" id="ENSGT00390000016213"/>
<dbReference type="HOGENOM" id="CLU_007638_0_0_1"/>
<dbReference type="InParanoid" id="Q6P4R8"/>
<dbReference type="OMA" id="RVSWTDF"/>
<dbReference type="OrthoDB" id="70874at2759"/>
<dbReference type="PAN-GO" id="Q6P4R8">
    <property type="GO annotations" value="1 GO annotation based on evolutionary models"/>
</dbReference>
<dbReference type="PhylomeDB" id="Q6P4R8"/>
<dbReference type="TreeFam" id="TF324944"/>
<dbReference type="PathwayCommons" id="Q6P4R8"/>
<dbReference type="Reactome" id="R-HSA-5689603">
    <property type="pathway name" value="UCH proteinases"/>
</dbReference>
<dbReference type="Reactome" id="R-HSA-5696394">
    <property type="pathway name" value="DNA Damage Recognition in GG-NER"/>
</dbReference>
<dbReference type="SignaLink" id="Q6P4R8"/>
<dbReference type="SIGNOR" id="Q6P4R8"/>
<dbReference type="BioGRID-ORCS" id="4798">
    <property type="hits" value="323 hits in 1182 CRISPR screens"/>
</dbReference>
<dbReference type="ChiTaRS" id="NFRKB">
    <property type="organism name" value="human"/>
</dbReference>
<dbReference type="EvolutionaryTrace" id="Q6P4R8"/>
<dbReference type="GeneWiki" id="NFRKB"/>
<dbReference type="GenomeRNAi" id="4798"/>
<dbReference type="Pharos" id="Q6P4R8">
    <property type="development level" value="Tbio"/>
</dbReference>
<dbReference type="PRO" id="PR:Q6P4R8"/>
<dbReference type="Proteomes" id="UP000005640">
    <property type="component" value="Chromosome 11"/>
</dbReference>
<dbReference type="RNAct" id="Q6P4R8">
    <property type="molecule type" value="protein"/>
</dbReference>
<dbReference type="Bgee" id="ENSG00000170322">
    <property type="expression patterns" value="Expressed in buccal mucosa cell and 197 other cell types or tissues"/>
</dbReference>
<dbReference type="ExpressionAtlas" id="Q6P4R8">
    <property type="expression patterns" value="baseline and differential"/>
</dbReference>
<dbReference type="GO" id="GO:0031011">
    <property type="term" value="C:Ino80 complex"/>
    <property type="evidence" value="ECO:0000314"/>
    <property type="project" value="UniProtKB"/>
</dbReference>
<dbReference type="GO" id="GO:0005654">
    <property type="term" value="C:nucleoplasm"/>
    <property type="evidence" value="ECO:0000314"/>
    <property type="project" value="HPA"/>
</dbReference>
<dbReference type="GO" id="GO:0005634">
    <property type="term" value="C:nucleus"/>
    <property type="evidence" value="ECO:0000314"/>
    <property type="project" value="UniProtKB"/>
</dbReference>
<dbReference type="GO" id="GO:0003677">
    <property type="term" value="F:DNA binding"/>
    <property type="evidence" value="ECO:0007669"/>
    <property type="project" value="UniProtKB-KW"/>
</dbReference>
<dbReference type="GO" id="GO:0002020">
    <property type="term" value="F:protease binding"/>
    <property type="evidence" value="ECO:0000353"/>
    <property type="project" value="UniProtKB"/>
</dbReference>
<dbReference type="GO" id="GO:0006338">
    <property type="term" value="P:chromatin remodeling"/>
    <property type="evidence" value="ECO:0000314"/>
    <property type="project" value="ComplexPortal"/>
</dbReference>
<dbReference type="GO" id="GO:0006310">
    <property type="term" value="P:DNA recombination"/>
    <property type="evidence" value="ECO:0007669"/>
    <property type="project" value="UniProtKB-KW"/>
</dbReference>
<dbReference type="GO" id="GO:0006281">
    <property type="term" value="P:DNA repair"/>
    <property type="evidence" value="ECO:0007669"/>
    <property type="project" value="UniProtKB-KW"/>
</dbReference>
<dbReference type="GO" id="GO:0045739">
    <property type="term" value="P:positive regulation of DNA repair"/>
    <property type="evidence" value="ECO:0000266"/>
    <property type="project" value="ComplexPortal"/>
</dbReference>
<dbReference type="GO" id="GO:0045893">
    <property type="term" value="P:positive regulation of DNA-templated transcription"/>
    <property type="evidence" value="ECO:0000315"/>
    <property type="project" value="ComplexPortal"/>
</dbReference>
<dbReference type="GO" id="GO:1904507">
    <property type="term" value="P:positive regulation of telomere maintenance in response to DNA damage"/>
    <property type="evidence" value="ECO:0000266"/>
    <property type="project" value="ComplexPortal"/>
</dbReference>
<dbReference type="GO" id="GO:0051726">
    <property type="term" value="P:regulation of cell cycle"/>
    <property type="evidence" value="ECO:0000315"/>
    <property type="project" value="ComplexPortal"/>
</dbReference>
<dbReference type="GO" id="GO:0033044">
    <property type="term" value="P:regulation of chromosome organization"/>
    <property type="evidence" value="ECO:0000315"/>
    <property type="project" value="ComplexPortal"/>
</dbReference>
<dbReference type="GO" id="GO:0006282">
    <property type="term" value="P:regulation of DNA repair"/>
    <property type="evidence" value="ECO:0000266"/>
    <property type="project" value="ComplexPortal"/>
</dbReference>
<dbReference type="GO" id="GO:0006275">
    <property type="term" value="P:regulation of DNA replication"/>
    <property type="evidence" value="ECO:0000315"/>
    <property type="project" value="ComplexPortal"/>
</dbReference>
<dbReference type="GO" id="GO:0060382">
    <property type="term" value="P:regulation of DNA strand elongation"/>
    <property type="evidence" value="ECO:0000315"/>
    <property type="project" value="ComplexPortal"/>
</dbReference>
<dbReference type="GO" id="GO:0045995">
    <property type="term" value="P:regulation of embryonic development"/>
    <property type="evidence" value="ECO:0000266"/>
    <property type="project" value="ComplexPortal"/>
</dbReference>
<dbReference type="GO" id="GO:0000723">
    <property type="term" value="P:telomere maintenance"/>
    <property type="evidence" value="ECO:0000266"/>
    <property type="project" value="ComplexPortal"/>
</dbReference>
<dbReference type="CDD" id="cd21865">
    <property type="entry name" value="DEUBAD_NFRKB"/>
    <property type="match status" value="1"/>
</dbReference>
<dbReference type="FunFam" id="1.10.10.2430:FF:000001">
    <property type="entry name" value="Nuclear factor related to kappaB binding protein"/>
    <property type="match status" value="1"/>
</dbReference>
<dbReference type="Gene3D" id="1.10.10.2430">
    <property type="entry name" value="NFRKB winged helix-like domain"/>
    <property type="match status" value="1"/>
</dbReference>
<dbReference type="InterPro" id="IPR044867">
    <property type="entry name" value="DEUBAD_dom"/>
</dbReference>
<dbReference type="InterPro" id="IPR024867">
    <property type="entry name" value="NFRKB"/>
</dbReference>
<dbReference type="InterPro" id="IPR025220">
    <property type="entry name" value="NFRKB_winged_dom"/>
</dbReference>
<dbReference type="InterPro" id="IPR038106">
    <property type="entry name" value="NFRKB_winged_sf"/>
</dbReference>
<dbReference type="PANTHER" id="PTHR13052">
    <property type="entry name" value="NFRKB-RELATED"/>
    <property type="match status" value="1"/>
</dbReference>
<dbReference type="PANTHER" id="PTHR13052:SF3">
    <property type="entry name" value="NUCLEAR FACTOR RELATED TO KAPPA-B-BINDING PROTEIN"/>
    <property type="match status" value="1"/>
</dbReference>
<dbReference type="Pfam" id="PF14465">
    <property type="entry name" value="NFRKB_winged"/>
    <property type="match status" value="1"/>
</dbReference>
<dbReference type="PROSITE" id="PS51916">
    <property type="entry name" value="DEUBAD"/>
    <property type="match status" value="1"/>
</dbReference>
<proteinExistence type="evidence at protein level"/>
<sequence>MDSLDHMLTDPLELGPCGDGHGTRIMEDCLLGGTRVSLPEDLLEDPEIFFDVVSLSTWQEVLSDSQREHLQQFLPQFPEDSAEQQNELILALFSGENFRFGNPLHIAQKLFRDGHFNPEVVKYRQLCFKSQYKRYLNSQQQYFHRLLKQILASRSDLLEMARRSGPALPFRQKRPSPSRTPEEREWRTQQRYLKVLREVKEECGDTALSSDEEDLSSWLPSSPARSPSPAVPLRVVPTLSTTDMKTADKVELGDSDLKIMLKKHHEKRKHQPDHPDLLTGDLTLNDIMTRVNAGRKGSLAALYDLAVLKKKVKEKEEKKKKKIKTIKSEAEDLAEPLSSTEGVAPLSQAPSPLAIPAIKEEPLEDLKPCLGINEISSSFFSLLLEILLLESQASLPMLEERVLDWQSSPASSLNSWFSAAPNWAELVLPALQYLAGESRAVPSSFSPFVEFKEKTQQWKLLGQSQDNEKELAALFQLWLETKDQAFCKQENEDSSDATTPVPRVRTDYVVRPSTGEEKRVFQEQERYRYSQPHKAFTFRMHGFESVVGPVKGVFDKETSLNKAREHSLLRSDRPAYVTILSLVRDAAARLPNGEGTRAEICELLKDSQFLAPDVTSTQVNTVVSGALDRLHYEKDPCVKYDIGRKLWIYLHRDRSEEEFERIHQAQAAAAKARKALQQKPKPPSKVKSSSKESSIKVLSSGPSEQSQMSLSDSSMPPTPVTPVTPTTPALPAIPISPPPVSAVNKSGPSTVSEPAKSSSGVLLVSSPTMPHLGTMLSPASSQTAPSSQAAARVVSHSGSAGLSQVRVVAQPSLPAVPQQSGGPAQTLPQMPAGPQIRVPATATQTKVVPQTVMATVPVKAQTTAATVQRPGPGQTGLTVTSLPATASPVSKPATSSPGTSAPSASTAAVIQNVTGQNIIKQVAITGQLGVKPQTGNSIPLTATNFRIQGKDVLRLPPSSITTDAKGQTVLRITPDMMATLAKSQVTTVKLTQDLFGTGGNTTGKGISATLHVTSNPVHAADSPAKASSASAPSSTPTGTTVVKVTPDLKPTEASSSAFRLMPALGVSVADQKGKSTVASSEAKPAATIRIVQGLGVMPPKAGQTITVATHAKQGASVASGSGTVHTSAVSLPSMNAAVSKTVAVASGAASTPISISTGAPTVRQVPVSTTVVSTSQAGKLPTRITVPLSVISQPMKGKSVVTAPIIKGNLGANLSGLGRNIILTTMPAGTKLIAGNKPVSFLTAQQLQQLQQQGQATQVRIQTVPASHLQQGTASGSSKAVSTVVVTTAPSPKQAPEQQ</sequence>
<gene>
    <name type="primary">NFRKB</name>
    <name type="synonym">INO80G</name>
</gene>
<keyword id="KW-0002">3D-structure</keyword>
<keyword id="KW-0007">Acetylation</keyword>
<keyword id="KW-0025">Alternative splicing</keyword>
<keyword id="KW-0227">DNA damage</keyword>
<keyword id="KW-0233">DNA recombination</keyword>
<keyword id="KW-0234">DNA repair</keyword>
<keyword id="KW-0238">DNA-binding</keyword>
<keyword id="KW-1017">Isopeptide bond</keyword>
<keyword id="KW-0539">Nucleus</keyword>
<keyword id="KW-0597">Phosphoprotein</keyword>
<keyword id="KW-1267">Proteomics identification</keyword>
<keyword id="KW-1185">Reference proteome</keyword>
<keyword id="KW-0804">Transcription</keyword>
<keyword id="KW-0805">Transcription regulation</keyword>
<keyword id="KW-0832">Ubl conjugation</keyword>
<reference key="1">
    <citation type="journal article" date="1991" name="New Biol.">
        <title>Cloning of R kappa B, a novel DNA-binding protein that recognizes the interleukin-2 receptor alpha chain kappa B site.</title>
        <authorList>
            <person name="Adams B.S."/>
            <person name="Leung K.Y."/>
            <person name="Hanley E.W."/>
            <person name="Nabel G.J."/>
        </authorList>
    </citation>
    <scope>NUCLEOTIDE SEQUENCE [MRNA] (ISOFORMS 1 AND 2)</scope>
    <scope>DNA-BINDING</scope>
    <scope>TISSUE SPECIFICITY</scope>
</reference>
<reference key="2">
    <citation type="submission" date="1994-08" db="EMBL/GenBank/DDBJ databases">
        <authorList>
            <person name="Nieters A."/>
            <person name="Bouwmeester T."/>
            <person name="Scheidereit C."/>
        </authorList>
    </citation>
    <scope>NUCLEOTIDE SEQUENCE [MRNA] (ISOFORM 2)</scope>
</reference>
<reference key="3">
    <citation type="journal article" date="2004" name="Genome Res.">
        <title>The status, quality, and expansion of the NIH full-length cDNA project: the Mammalian Gene Collection (MGC).</title>
        <authorList>
            <consortium name="The MGC Project Team"/>
        </authorList>
    </citation>
    <scope>NUCLEOTIDE SEQUENCE [LARGE SCALE MRNA] (ISOFORM 1)</scope>
    <source>
        <tissue>Testis</tissue>
    </source>
</reference>
<reference key="4">
    <citation type="journal article" date="2007" name="BMC Genomics">
        <title>The full-ORF clone resource of the German cDNA consortium.</title>
        <authorList>
            <person name="Bechtel S."/>
            <person name="Rosenfelder H."/>
            <person name="Duda A."/>
            <person name="Schmidt C.P."/>
            <person name="Ernst U."/>
            <person name="Wellenreuther R."/>
            <person name="Mehrle A."/>
            <person name="Schuster C."/>
            <person name="Bahr A."/>
            <person name="Bloecker H."/>
            <person name="Heubner D."/>
            <person name="Hoerlein A."/>
            <person name="Michel G."/>
            <person name="Wedler H."/>
            <person name="Koehrer K."/>
            <person name="Ottenwaelder B."/>
            <person name="Poustka A."/>
            <person name="Wiemann S."/>
            <person name="Schupp I."/>
        </authorList>
    </citation>
    <scope>NUCLEOTIDE SEQUENCE [LARGE SCALE MRNA] OF 654-1299 (ISOFORM 3)</scope>
    <source>
        <tissue>Fetal brain</tissue>
    </source>
</reference>
<reference key="5">
    <citation type="journal article" date="2005" name="J. Biol. Chem.">
        <title>A mammalian chromatin remodeling complex with similarities to the yeast INO80 complex.</title>
        <authorList>
            <person name="Jin J."/>
            <person name="Cai Y."/>
            <person name="Yao T."/>
            <person name="Gottschalk A.J."/>
            <person name="Florens L."/>
            <person name="Swanson S.K."/>
            <person name="Gutierrez J.L."/>
            <person name="Coleman M.K."/>
            <person name="Workman J.L."/>
            <person name="Mushegian A."/>
            <person name="Washburn M.P."/>
            <person name="Conaway R.C."/>
            <person name="Conaway J.W."/>
        </authorList>
    </citation>
    <scope>IDENTIFICATION IN INO80 COMPLEX</scope>
    <scope>IDENTIFICATION BY MASS SPECTROMETRY</scope>
</reference>
<reference key="6">
    <citation type="journal article" date="2006" name="Cell">
        <title>Global, in vivo, and site-specific phosphorylation dynamics in signaling networks.</title>
        <authorList>
            <person name="Olsen J.V."/>
            <person name="Blagoev B."/>
            <person name="Gnad F."/>
            <person name="Macek B."/>
            <person name="Kumar C."/>
            <person name="Mortensen P."/>
            <person name="Mann M."/>
        </authorList>
    </citation>
    <scope>IDENTIFICATION BY MASS SPECTROMETRY [LARGE SCALE ANALYSIS]</scope>
    <source>
        <tissue>Cervix carcinoma</tissue>
    </source>
</reference>
<reference key="7">
    <citation type="journal article" date="2008" name="Mol. Cell">
        <title>Distinct modes of regulation of the Uch37 deubiquitinating enzyme in the proteasome and in the Ino80 chromatin-remodeling complex.</title>
        <authorList>
            <person name="Yao T."/>
            <person name="Song L."/>
            <person name="Jin J."/>
            <person name="Cai Y."/>
            <person name="Takahashi H."/>
            <person name="Swanson S.K."/>
            <person name="Washburn M.P."/>
            <person name="Florens L."/>
            <person name="Conaway R.C."/>
            <person name="Cohen R.E."/>
            <person name="Conaway J.W."/>
        </authorList>
    </citation>
    <scope>SUBCELLULAR LOCATION</scope>
    <scope>SUBUNIT</scope>
    <scope>IDENTIFICATION IN THE INO80 COMPLEX</scope>
    <scope>INTERACTION WITH UCHL5</scope>
    <scope>FUNCTION</scope>
</reference>
<reference key="8">
    <citation type="journal article" date="2008" name="Proc. Natl. Acad. Sci. U.S.A.">
        <title>A quantitative atlas of mitotic phosphorylation.</title>
        <authorList>
            <person name="Dephoure N."/>
            <person name="Zhou C."/>
            <person name="Villen J."/>
            <person name="Beausoleil S.A."/>
            <person name="Bakalarski C.E."/>
            <person name="Elledge S.J."/>
            <person name="Gygi S.P."/>
        </authorList>
    </citation>
    <scope>PHOSPHORYLATION [LARGE SCALE ANALYSIS] AT SER-298 AND SER-1291</scope>
    <scope>IDENTIFICATION BY MASS SPECTROMETRY [LARGE SCALE ANALYSIS]</scope>
    <source>
        <tissue>Cervix carcinoma</tissue>
    </source>
</reference>
<reference key="9">
    <citation type="journal article" date="2009" name="Anal. Chem.">
        <title>Lys-N and trypsin cover complementary parts of the phosphoproteome in a refined SCX-based approach.</title>
        <authorList>
            <person name="Gauci S."/>
            <person name="Helbig A.O."/>
            <person name="Slijper M."/>
            <person name="Krijgsveld J."/>
            <person name="Heck A.J."/>
            <person name="Mohammed S."/>
        </authorList>
    </citation>
    <scope>IDENTIFICATION BY MASS SPECTROMETRY [LARGE SCALE ANALYSIS]</scope>
</reference>
<reference key="10">
    <citation type="journal article" date="2009" name="Sci. Signal.">
        <title>Quantitative phosphoproteomic analysis of T cell receptor signaling reveals system-wide modulation of protein-protein interactions.</title>
        <authorList>
            <person name="Mayya V."/>
            <person name="Lundgren D.H."/>
            <person name="Hwang S.-I."/>
            <person name="Rezaul K."/>
            <person name="Wu L."/>
            <person name="Eng J.K."/>
            <person name="Rodionov V."/>
            <person name="Han D.K."/>
        </authorList>
    </citation>
    <scope>PHOSPHORYLATION [LARGE SCALE ANALYSIS] AT SER-298 AND SER-1291</scope>
    <scope>IDENTIFICATION BY MASS SPECTROMETRY [LARGE SCALE ANALYSIS]</scope>
    <source>
        <tissue>Leukemic T-cell</tissue>
    </source>
</reference>
<reference key="11">
    <citation type="journal article" date="2009" name="Science">
        <title>Lysine acetylation targets protein complexes and co-regulates major cellular functions.</title>
        <authorList>
            <person name="Choudhary C."/>
            <person name="Kumar C."/>
            <person name="Gnad F."/>
            <person name="Nielsen M.L."/>
            <person name="Rehman M."/>
            <person name="Walther T.C."/>
            <person name="Olsen J.V."/>
            <person name="Mann M."/>
        </authorList>
    </citation>
    <scope>ACETYLATION [LARGE SCALE ANALYSIS] AT LYS-1237</scope>
    <scope>IDENTIFICATION BY MASS SPECTROMETRY [LARGE SCALE ANALYSIS]</scope>
</reference>
<reference key="12">
    <citation type="journal article" date="2010" name="Sci. Signal.">
        <title>Quantitative phosphoproteomics reveals widespread full phosphorylation site occupancy during mitosis.</title>
        <authorList>
            <person name="Olsen J.V."/>
            <person name="Vermeulen M."/>
            <person name="Santamaria A."/>
            <person name="Kumar C."/>
            <person name="Miller M.L."/>
            <person name="Jensen L.J."/>
            <person name="Gnad F."/>
            <person name="Cox J."/>
            <person name="Jensen T.S."/>
            <person name="Nigg E.A."/>
            <person name="Brunak S."/>
            <person name="Mann M."/>
        </authorList>
    </citation>
    <scope>PHOSPHORYLATION [LARGE SCALE ANALYSIS] AT SER-298; SER-1022 AND SER-1291</scope>
    <scope>IDENTIFICATION BY MASS SPECTROMETRY [LARGE SCALE ANALYSIS]</scope>
    <source>
        <tissue>Cervix carcinoma</tissue>
    </source>
</reference>
<reference key="13">
    <citation type="journal article" date="2011" name="J. Biol. Chem.">
        <title>Subunit organization of the human INO80 chromatin remodeling complex: An evolutionarily conserved core complex catalyzes ATP-dependent nucleosome remodeling.</title>
        <authorList>
            <person name="Chen L."/>
            <person name="Cai Y."/>
            <person name="Jin J."/>
            <person name="Florens L."/>
            <person name="Swanson S.K."/>
            <person name="Washburn M.P."/>
            <person name="Conaway J.W."/>
            <person name="Conaway R.C."/>
        </authorList>
    </citation>
    <scope>IDENTIFICATION IN THE INO80 COMPLEX</scope>
</reference>
<reference key="14">
    <citation type="journal article" date="2011" name="Sci. Signal.">
        <title>System-wide temporal characterization of the proteome and phosphoproteome of human embryonic stem cell differentiation.</title>
        <authorList>
            <person name="Rigbolt K.T."/>
            <person name="Prokhorova T.A."/>
            <person name="Akimov V."/>
            <person name="Henningsen J."/>
            <person name="Johansen P.T."/>
            <person name="Kratchmarova I."/>
            <person name="Kassem M."/>
            <person name="Mann M."/>
            <person name="Olsen J.V."/>
            <person name="Blagoev B."/>
        </authorList>
    </citation>
    <scope>PHOSPHORYLATION [LARGE SCALE ANALYSIS] AT SER-298 AND SER-1291</scope>
    <scope>IDENTIFICATION BY MASS SPECTROMETRY [LARGE SCALE ANALYSIS]</scope>
</reference>
<reference key="15">
    <citation type="journal article" date="2013" name="J. Proteome Res.">
        <title>Toward a comprehensive characterization of a human cancer cell phosphoproteome.</title>
        <authorList>
            <person name="Zhou H."/>
            <person name="Di Palma S."/>
            <person name="Preisinger C."/>
            <person name="Peng M."/>
            <person name="Polat A.N."/>
            <person name="Heck A.J."/>
            <person name="Mohammed S."/>
        </authorList>
    </citation>
    <scope>PHOSPHORYLATION [LARGE SCALE ANALYSIS] AT SER-228; SER-298; SER-1022 AND SER-1291</scope>
    <scope>IDENTIFICATION BY MASS SPECTROMETRY [LARGE SCALE ANALYSIS]</scope>
    <source>
        <tissue>Cervix carcinoma</tissue>
        <tissue>Erythroleukemia</tissue>
    </source>
</reference>
<reference key="16">
    <citation type="journal article" date="2014" name="J. Proteomics">
        <title>An enzyme assisted RP-RPLC approach for in-depth analysis of human liver phosphoproteome.</title>
        <authorList>
            <person name="Bian Y."/>
            <person name="Song C."/>
            <person name="Cheng K."/>
            <person name="Dong M."/>
            <person name="Wang F."/>
            <person name="Huang J."/>
            <person name="Sun D."/>
            <person name="Wang L."/>
            <person name="Ye M."/>
            <person name="Zou H."/>
        </authorList>
    </citation>
    <scope>PHOSPHORYLATION [LARGE SCALE ANALYSIS] AT SER-351 AND SER-1291</scope>
    <scope>IDENTIFICATION BY MASS SPECTROMETRY [LARGE SCALE ANALYSIS]</scope>
    <source>
        <tissue>Liver</tissue>
    </source>
</reference>
<reference key="17">
    <citation type="journal article" date="2014" name="Nat. Struct. Mol. Biol.">
        <title>Uncovering global SUMOylation signaling networks in a site-specific manner.</title>
        <authorList>
            <person name="Hendriks I.A."/>
            <person name="D'Souza R.C."/>
            <person name="Yang B."/>
            <person name="Verlaan-de Vries M."/>
            <person name="Mann M."/>
            <person name="Vertegaal A.C."/>
        </authorList>
    </citation>
    <scope>SUMOYLATION [LARGE SCALE ANALYSIS] AT LYS-488</scope>
    <scope>IDENTIFICATION BY MASS SPECTROMETRY [LARGE SCALE ANALYSIS]</scope>
</reference>
<reference key="18">
    <citation type="journal article" date="2014" name="Proc. Natl. Acad. Sci. U.S.A.">
        <title>Mapping of SUMO sites and analysis of SUMOylation changes induced by external stimuli.</title>
        <authorList>
            <person name="Impens F."/>
            <person name="Radoshevich L."/>
            <person name="Cossart P."/>
            <person name="Ribet D."/>
        </authorList>
    </citation>
    <scope>SUMOYLATION [LARGE SCALE ANALYSIS] AT LYS-488</scope>
    <scope>IDENTIFICATION BY MASS SPECTROMETRY [LARGE SCALE ANALYSIS]</scope>
</reference>
<reference key="19">
    <citation type="journal article" date="2015" name="Mol. Cell. Proteomics">
        <title>System-wide analysis of SUMOylation dynamics in response to replication stress reveals novel small ubiquitin-like modified target proteins and acceptor lysines relevant for genome stability.</title>
        <authorList>
            <person name="Xiao Z."/>
            <person name="Chang J.G."/>
            <person name="Hendriks I.A."/>
            <person name="Sigurdsson J.O."/>
            <person name="Olsen J.V."/>
            <person name="Vertegaal A.C."/>
        </authorList>
    </citation>
    <scope>SUMOYLATION [LARGE SCALE ANALYSIS] AT LYS-488</scope>
    <scope>IDENTIFICATION BY MASS SPECTROMETRY [LARGE SCALE ANALYSIS]</scope>
</reference>
<reference key="20">
    <citation type="journal article" date="2017" name="Nat. Struct. Mol. Biol.">
        <title>Site-specific mapping of the human SUMO proteome reveals co-modification with phosphorylation.</title>
        <authorList>
            <person name="Hendriks I.A."/>
            <person name="Lyon D."/>
            <person name="Young C."/>
            <person name="Jensen L.J."/>
            <person name="Vertegaal A.C."/>
            <person name="Nielsen M.L."/>
        </authorList>
    </citation>
    <scope>SUMOYLATION [LARGE SCALE ANALYSIS] AT LYS-327; LYS-469 AND LYS-488</scope>
    <scope>IDENTIFICATION BY MASS SPECTROMETRY [LARGE SCALE ANALYSIS]</scope>
</reference>
<reference key="21">
    <citation type="journal article" date="2012" name="PLoS ONE">
        <title>Structure of a novel winged-helix like domain from human NFRKB protein.</title>
        <authorList>
            <person name="Kumar A."/>
            <person name="Mocklinghoff S."/>
            <person name="Yumoto F."/>
            <person name="Jaroszewski L."/>
            <person name="Farr C.L."/>
            <person name="Grzechnik A."/>
            <person name="Nguyen P."/>
            <person name="Weichenberger C.X."/>
            <person name="Chiu H.J."/>
            <person name="Klock H.E."/>
            <person name="Elsliger M.A."/>
            <person name="Deacon A.M."/>
            <person name="Godzik A."/>
            <person name="Lesley S.A."/>
            <person name="Conklin B.R."/>
            <person name="Fletterick R.J."/>
            <person name="Wilson I.A."/>
        </authorList>
    </citation>
    <scope>X-RAY CRYSTALLOGRAPHY (2.18 ANGSTROMS) OF 370-495</scope>
</reference>
<organism>
    <name type="scientific">Homo sapiens</name>
    <name type="common">Human</name>
    <dbReference type="NCBI Taxonomy" id="9606"/>
    <lineage>
        <taxon>Eukaryota</taxon>
        <taxon>Metazoa</taxon>
        <taxon>Chordata</taxon>
        <taxon>Craniata</taxon>
        <taxon>Vertebrata</taxon>
        <taxon>Euteleostomi</taxon>
        <taxon>Mammalia</taxon>
        <taxon>Eutheria</taxon>
        <taxon>Euarchontoglires</taxon>
        <taxon>Primates</taxon>
        <taxon>Haplorrhini</taxon>
        <taxon>Catarrhini</taxon>
        <taxon>Hominidae</taxon>
        <taxon>Homo</taxon>
    </lineage>
</organism>
<accession>Q6P4R8</accession>
<accession>Q12869</accession>
<accession>Q15312</accession>
<accession>Q9H048</accession>
<feature type="chain" id="PRO_0000227807" description="Nuclear factor related to kappa-B-binding protein">
    <location>
        <begin position="1"/>
        <end position="1299"/>
    </location>
</feature>
<feature type="domain" description="DEUBAD" evidence="1">
    <location>
        <begin position="39"/>
        <end position="156"/>
    </location>
</feature>
<feature type="region of interest" description="Disordered" evidence="2">
    <location>
        <begin position="163"/>
        <end position="187"/>
    </location>
</feature>
<feature type="region of interest" description="Disordered" evidence="2">
    <location>
        <begin position="204"/>
        <end position="232"/>
    </location>
</feature>
<feature type="region of interest" description="Winged-helix like domain">
    <location>
        <begin position="370"/>
        <end position="495"/>
    </location>
</feature>
<feature type="region of interest" description="Disordered" evidence="2">
    <location>
        <begin position="669"/>
        <end position="760"/>
    </location>
</feature>
<feature type="region of interest" description="Disordered" evidence="2">
    <location>
        <begin position="882"/>
        <end position="902"/>
    </location>
</feature>
<feature type="region of interest" description="Disordered" evidence="2">
    <location>
        <begin position="1017"/>
        <end position="1043"/>
    </location>
</feature>
<feature type="compositionally biased region" description="Low complexity" evidence="2">
    <location>
        <begin position="216"/>
        <end position="232"/>
    </location>
</feature>
<feature type="compositionally biased region" description="Low complexity" evidence="2">
    <location>
        <begin position="677"/>
        <end position="688"/>
    </location>
</feature>
<feature type="compositionally biased region" description="Low complexity" evidence="2">
    <location>
        <begin position="695"/>
        <end position="715"/>
    </location>
</feature>
<feature type="compositionally biased region" description="Low complexity" evidence="2">
    <location>
        <begin position="723"/>
        <end position="733"/>
    </location>
</feature>
<feature type="compositionally biased region" description="Polar residues" evidence="2">
    <location>
        <begin position="744"/>
        <end position="760"/>
    </location>
</feature>
<feature type="compositionally biased region" description="Low complexity" evidence="2">
    <location>
        <begin position="892"/>
        <end position="902"/>
    </location>
</feature>
<feature type="compositionally biased region" description="Low complexity" evidence="2">
    <location>
        <begin position="1019"/>
        <end position="1043"/>
    </location>
</feature>
<feature type="modified residue" description="Phosphoserine" evidence="16">
    <location>
        <position position="228"/>
    </location>
</feature>
<feature type="modified residue" description="Phosphoserine" evidence="11 13 14 15 16">
    <location>
        <position position="298"/>
    </location>
</feature>
<feature type="modified residue" description="Phosphoserine" evidence="17">
    <location>
        <position position="351"/>
    </location>
</feature>
<feature type="modified residue" description="Phosphoserine" evidence="14 16">
    <location>
        <position position="1022"/>
    </location>
</feature>
<feature type="modified residue" description="N6-acetyllysine" evidence="12">
    <location>
        <position position="1237"/>
    </location>
</feature>
<feature type="modified residue" description="Phosphoserine" evidence="11 13 14 15 16 17">
    <location>
        <position position="1291"/>
    </location>
</feature>
<feature type="cross-link" description="Glycyl lysine isopeptide (Lys-Gly) (interchain with G-Cter in SUMO2)" evidence="21">
    <location>
        <position position="327"/>
    </location>
</feature>
<feature type="cross-link" description="Glycyl lysine isopeptide (Lys-Gly) (interchain with G-Cter in SUMO2)" evidence="21">
    <location>
        <position position="469"/>
    </location>
</feature>
<feature type="cross-link" description="Glycyl lysine isopeptide (Lys-Gly) (interchain with G-Cter in SUMO1); alternate" evidence="18">
    <location>
        <position position="488"/>
    </location>
</feature>
<feature type="cross-link" description="Glycyl lysine isopeptide (Lys-Gly) (interchain with G-Cter in SUMO2); alternate" evidence="18 19 20 21">
    <location>
        <position position="488"/>
    </location>
</feature>
<feature type="splice variant" id="VSP_017592" description="In isoform 2." evidence="7 9">
    <original>M</original>
    <variation>MHVFVQSTCGEETM</variation>
    <location>
        <position position="1"/>
    </location>
</feature>
<feature type="splice variant" id="VSP_017593" description="In isoform 2." evidence="7 9">
    <original>E</original>
    <variation>EATLDLQEQFSFE</variation>
    <location>
        <position position="213"/>
    </location>
</feature>
<feature type="splice variant" id="VSP_017594" description="In isoform 3." evidence="8">
    <location>
        <position position="687"/>
    </location>
</feature>
<feature type="sequence conflict" description="In Ref. 3; AAH63280." evidence="10" ref="3">
    <original>G</original>
    <variation>E</variation>
    <location>
        <position position="1178"/>
    </location>
</feature>
<feature type="sequence conflict" description="In Ref. 3; AAH63280." evidence="10" ref="3">
    <original>N</original>
    <variation>D</variation>
    <location>
        <position position="1213"/>
    </location>
</feature>
<feature type="helix" evidence="23">
    <location>
        <begin position="42"/>
        <end position="44"/>
    </location>
</feature>
<feature type="helix" evidence="23">
    <location>
        <begin position="46"/>
        <end position="52"/>
    </location>
</feature>
<feature type="helix" evidence="23">
    <location>
        <begin position="55"/>
        <end position="60"/>
    </location>
</feature>
<feature type="helix" evidence="23">
    <location>
        <begin position="64"/>
        <end position="73"/>
    </location>
</feature>
<feature type="strand" evidence="23">
    <location>
        <begin position="78"/>
        <end position="80"/>
    </location>
</feature>
<feature type="helix" evidence="23">
    <location>
        <begin position="81"/>
        <end position="94"/>
    </location>
</feature>
<feature type="strand" evidence="23">
    <location>
        <begin position="98"/>
        <end position="101"/>
    </location>
</feature>
<feature type="helix" evidence="23">
    <location>
        <begin position="103"/>
        <end position="112"/>
    </location>
</feature>
<feature type="turn" evidence="23">
    <location>
        <begin position="113"/>
        <end position="116"/>
    </location>
</feature>
<feature type="helix" evidence="23">
    <location>
        <begin position="118"/>
        <end position="151"/>
    </location>
</feature>
<feature type="helix" evidence="22">
    <location>
        <begin position="379"/>
        <end position="388"/>
    </location>
</feature>
<feature type="strand" evidence="22">
    <location>
        <begin position="391"/>
        <end position="394"/>
    </location>
</feature>
<feature type="helix" evidence="22">
    <location>
        <begin position="395"/>
        <end position="406"/>
    </location>
</feature>
<feature type="helix" evidence="22">
    <location>
        <begin position="409"/>
        <end position="413"/>
    </location>
</feature>
<feature type="helix" evidence="22">
    <location>
        <begin position="417"/>
        <end position="419"/>
    </location>
</feature>
<feature type="helix" evidence="22">
    <location>
        <begin position="424"/>
        <end position="426"/>
    </location>
</feature>
<feature type="helix" evidence="22">
    <location>
        <begin position="427"/>
        <end position="434"/>
    </location>
</feature>
<feature type="strand" evidence="22">
    <location>
        <begin position="448"/>
        <end position="451"/>
    </location>
</feature>
<feature type="strand" evidence="22">
    <location>
        <begin position="457"/>
        <end position="460"/>
    </location>
</feature>
<feature type="helix" evidence="22">
    <location>
        <begin position="471"/>
        <end position="481"/>
    </location>
</feature>
<evidence type="ECO:0000255" key="1">
    <source>
        <dbReference type="PROSITE-ProRule" id="PRU01264"/>
    </source>
</evidence>
<evidence type="ECO:0000256" key="2">
    <source>
        <dbReference type="SAM" id="MobiDB-lite"/>
    </source>
</evidence>
<evidence type="ECO:0000269" key="3">
    <source>
    </source>
</evidence>
<evidence type="ECO:0000269" key="4">
    <source>
    </source>
</evidence>
<evidence type="ECO:0000269" key="5">
    <source>
    </source>
</evidence>
<evidence type="ECO:0000269" key="6">
    <source>
    </source>
</evidence>
<evidence type="ECO:0000303" key="7">
    <source>
    </source>
</evidence>
<evidence type="ECO:0000303" key="8">
    <source>
    </source>
</evidence>
<evidence type="ECO:0000303" key="9">
    <source ref="2"/>
</evidence>
<evidence type="ECO:0000305" key="10"/>
<evidence type="ECO:0007744" key="11">
    <source>
    </source>
</evidence>
<evidence type="ECO:0007744" key="12">
    <source>
    </source>
</evidence>
<evidence type="ECO:0007744" key="13">
    <source>
    </source>
</evidence>
<evidence type="ECO:0007744" key="14">
    <source>
    </source>
</evidence>
<evidence type="ECO:0007744" key="15">
    <source>
    </source>
</evidence>
<evidence type="ECO:0007744" key="16">
    <source>
    </source>
</evidence>
<evidence type="ECO:0007744" key="17">
    <source>
    </source>
</evidence>
<evidence type="ECO:0007744" key="18">
    <source>
    </source>
</evidence>
<evidence type="ECO:0007744" key="19">
    <source>
    </source>
</evidence>
<evidence type="ECO:0007744" key="20">
    <source>
    </source>
</evidence>
<evidence type="ECO:0007744" key="21">
    <source>
    </source>
</evidence>
<evidence type="ECO:0007829" key="22">
    <source>
        <dbReference type="PDB" id="3U21"/>
    </source>
</evidence>
<evidence type="ECO:0007829" key="23">
    <source>
        <dbReference type="PDB" id="4WLP"/>
    </source>
</evidence>